<comment type="function">
    <text evidence="2">Packages the positive strand viral genome RNA into a helical ribonucleocapsid (RNP) and plays a fundamental role during virion assembly through its interactions with the viral genome and membrane protein M. Plays an important role in enhancing the efficiency of subgenomic viral RNA transcription as well as viral replication.</text>
</comment>
<comment type="subunit">
    <text evidence="2">Homooligomer. Both monomeric and oligomeric forms interact with RNA. Interacts with protein M. Interacts with NSP3; this interaction serves to tether the genome to the newly translated replicase-transcriptase complex at a very early stage of infection.</text>
</comment>
<comment type="subcellular location">
    <subcellularLocation>
        <location evidence="2">Virion</location>
    </subcellularLocation>
    <subcellularLocation>
        <location evidence="2">Host endoplasmic reticulum-Golgi intermediate compartment</location>
    </subcellularLocation>
    <subcellularLocation>
        <location evidence="2">Host Golgi apparatus</location>
    </subcellularLocation>
    <text evidence="2">Located inside the virion, complexed with the viral RNA. Probably associates with ER-derived membranes where it participates in viral RNA synthesis and virus budding.</text>
</comment>
<comment type="PTM">
    <text evidence="2">ADP-ribosylated. The ADP-ribosylation is retained in the virion during infection.</text>
</comment>
<comment type="PTM">
    <text evidence="2">Phosphorylated on serine and threonine residues.</text>
</comment>
<comment type="similarity">
    <text evidence="2">Belongs to the betacoronavirus nucleocapsid protein family.</text>
</comment>
<reference key="1">
    <citation type="journal article" date="2007" name="J. Virol.">
        <title>Comparative analysis of twelve genomes of three novel group 2c and group 2d coronaviruses reveals unique group and subgroup features.</title>
        <authorList>
            <person name="Woo P.C.Y."/>
            <person name="Wang M."/>
            <person name="Lau S.K.P."/>
            <person name="Xu H.F."/>
            <person name="Poon R.W.S."/>
            <person name="Guo R."/>
            <person name="Wong B.H.L."/>
            <person name="Gao K."/>
            <person name="Tsoi H.-W."/>
            <person name="Huang Y."/>
            <person name="Li K.S.M."/>
            <person name="Lam C.S.F."/>
            <person name="Chan K.-H."/>
            <person name="Zheng B.-J."/>
            <person name="Yuen K.-Y."/>
        </authorList>
    </citation>
    <scope>NUCLEOTIDE SEQUENCE [GENOMIC RNA]</scope>
    <source>
        <strain>Isolate HKU5-1</strain>
    </source>
</reference>
<protein>
    <recommendedName>
        <fullName evidence="2">Nucleoprotein</fullName>
    </recommendedName>
    <alternativeName>
        <fullName evidence="2">Nucleocapsid protein</fullName>
        <shortName evidence="2">NC</shortName>
        <shortName evidence="2">Protein N</shortName>
    </alternativeName>
</protein>
<evidence type="ECO:0000250" key="1">
    <source>
        <dbReference type="UniProtKB" id="P0DTC9"/>
    </source>
</evidence>
<evidence type="ECO:0000255" key="2">
    <source>
        <dbReference type="HAMAP-Rule" id="MF_04096"/>
    </source>
</evidence>
<evidence type="ECO:0000255" key="3">
    <source>
        <dbReference type="PROSITE-ProRule" id="PRU01276"/>
    </source>
</evidence>
<evidence type="ECO:0000255" key="4">
    <source>
        <dbReference type="PROSITE-ProRule" id="PRU01277"/>
    </source>
</evidence>
<evidence type="ECO:0000256" key="5">
    <source>
        <dbReference type="SAM" id="MobiDB-lite"/>
    </source>
</evidence>
<feature type="chain" id="PRO_0000290260" description="Nucleoprotein">
    <location>
        <begin position="1"/>
        <end position="427"/>
    </location>
</feature>
<feature type="domain" description="CoV N NTD" evidence="3">
    <location>
        <begin position="38"/>
        <end position="163"/>
    </location>
</feature>
<feature type="domain" description="CoV N CTD" evidence="4">
    <location>
        <begin position="238"/>
        <end position="361"/>
    </location>
</feature>
<feature type="region of interest" description="Disordered" evidence="5">
    <location>
        <begin position="1"/>
        <end position="72"/>
    </location>
</feature>
<feature type="region of interest" description="RNA-binding" evidence="2">
    <location>
        <begin position="34"/>
        <end position="172"/>
    </location>
</feature>
<feature type="region of interest" description="Disordered" evidence="5">
    <location>
        <begin position="144"/>
        <end position="204"/>
    </location>
</feature>
<feature type="region of interest" description="Dimerization" evidence="2">
    <location>
        <begin position="249"/>
        <end position="359"/>
    </location>
</feature>
<feature type="region of interest" description="Disordered" evidence="5">
    <location>
        <begin position="361"/>
        <end position="411"/>
    </location>
</feature>
<feature type="compositionally biased region" description="Polar residues" evidence="5">
    <location>
        <begin position="15"/>
        <end position="25"/>
    </location>
</feature>
<feature type="compositionally biased region" description="Polar residues" evidence="5">
    <location>
        <begin position="36"/>
        <end position="50"/>
    </location>
</feature>
<feature type="compositionally biased region" description="Low complexity" evidence="5">
    <location>
        <begin position="167"/>
        <end position="197"/>
    </location>
</feature>
<feature type="binding site" evidence="1">
    <location>
        <position position="82"/>
    </location>
    <ligand>
        <name>RNA</name>
        <dbReference type="ChEBI" id="CHEBI:33697"/>
    </ligand>
</feature>
<feature type="binding site" evidence="1">
    <location>
        <position position="96"/>
    </location>
    <ligand>
        <name>RNA</name>
        <dbReference type="ChEBI" id="CHEBI:33697"/>
    </ligand>
</feature>
<feature type="binding site" evidence="1">
    <location>
        <position position="137"/>
    </location>
    <ligand>
        <name>RNA</name>
        <dbReference type="ChEBI" id="CHEBI:33697"/>
    </ligand>
</feature>
<feature type="modified residue" description="Phosphoserine; by host" evidence="2">
    <location>
        <position position="132"/>
    </location>
</feature>
<feature type="modified residue" description="Phosphothreonine; by host" evidence="2">
    <location>
        <position position="147"/>
    </location>
</feature>
<dbReference type="EMBL" id="EF065509">
    <property type="protein sequence ID" value="ABN10882.1"/>
    <property type="molecule type" value="Genomic_RNA"/>
</dbReference>
<dbReference type="RefSeq" id="YP_001039969.1">
    <property type="nucleotide sequence ID" value="NC_009020.1"/>
</dbReference>
<dbReference type="SMR" id="A3EXD7"/>
<dbReference type="IntAct" id="A3EXD7">
    <property type="interactions" value="2"/>
</dbReference>
<dbReference type="GeneID" id="4836000"/>
<dbReference type="KEGG" id="vg:4836000"/>
<dbReference type="OrthoDB" id="3036at10239"/>
<dbReference type="Proteomes" id="UP000007451">
    <property type="component" value="Segment"/>
</dbReference>
<dbReference type="GO" id="GO:0044172">
    <property type="term" value="C:host cell endoplasmic reticulum-Golgi intermediate compartment"/>
    <property type="evidence" value="ECO:0007669"/>
    <property type="project" value="UniProtKB-SubCell"/>
</dbReference>
<dbReference type="GO" id="GO:0044177">
    <property type="term" value="C:host cell Golgi apparatus"/>
    <property type="evidence" value="ECO:0007669"/>
    <property type="project" value="UniProtKB-SubCell"/>
</dbReference>
<dbReference type="GO" id="GO:1990904">
    <property type="term" value="C:ribonucleoprotein complex"/>
    <property type="evidence" value="ECO:0007669"/>
    <property type="project" value="UniProtKB-KW"/>
</dbReference>
<dbReference type="GO" id="GO:0019013">
    <property type="term" value="C:viral nucleocapsid"/>
    <property type="evidence" value="ECO:0007669"/>
    <property type="project" value="UniProtKB-UniRule"/>
</dbReference>
<dbReference type="GO" id="GO:0003723">
    <property type="term" value="F:RNA binding"/>
    <property type="evidence" value="ECO:0007669"/>
    <property type="project" value="UniProtKB-UniRule"/>
</dbReference>
<dbReference type="CDD" id="cd21595">
    <property type="entry name" value="CoV_N-CTD"/>
    <property type="match status" value="1"/>
</dbReference>
<dbReference type="CDD" id="cd21554">
    <property type="entry name" value="CoV_N-NTD"/>
    <property type="match status" value="1"/>
</dbReference>
<dbReference type="HAMAP" id="MF_04096">
    <property type="entry name" value="BETA_CORONA_NCAP"/>
    <property type="match status" value="1"/>
</dbReference>
<dbReference type="InterPro" id="IPR044344">
    <property type="entry name" value="N_prot_C_CoV"/>
</dbReference>
<dbReference type="InterPro" id="IPR044345">
    <property type="entry name" value="N_prot_N_CoV"/>
</dbReference>
<dbReference type="InterPro" id="IPR043505">
    <property type="entry name" value="NCAP_bCoV"/>
</dbReference>
<dbReference type="InterPro" id="IPR001218">
    <property type="entry name" value="Nucleocap_CoV"/>
</dbReference>
<dbReference type="InterPro" id="IPR037179">
    <property type="entry name" value="Nucleocapsid_C"/>
</dbReference>
<dbReference type="InterPro" id="IPR037195">
    <property type="entry name" value="Nucleocapsid_N"/>
</dbReference>
<dbReference type="Pfam" id="PF00937">
    <property type="entry name" value="CoV_nucleocap"/>
    <property type="match status" value="1"/>
</dbReference>
<dbReference type="PIRSF" id="PIRSF003888">
    <property type="entry name" value="Corona_nucleocap"/>
    <property type="match status" value="1"/>
</dbReference>
<dbReference type="SUPFAM" id="SSF110304">
    <property type="entry name" value="Coronavirus RNA-binding domain"/>
    <property type="match status" value="1"/>
</dbReference>
<dbReference type="SUPFAM" id="SSF103068">
    <property type="entry name" value="Nucleocapsid protein dimerization domain"/>
    <property type="match status" value="1"/>
</dbReference>
<dbReference type="PROSITE" id="PS51929">
    <property type="entry name" value="COV_N_CTD"/>
    <property type="match status" value="1"/>
</dbReference>
<dbReference type="PROSITE" id="PS51928">
    <property type="entry name" value="COV_N_NTD"/>
    <property type="match status" value="1"/>
</dbReference>
<gene>
    <name evidence="2" type="primary">N</name>
    <name type="ORF">6</name>
</gene>
<keyword id="KW-0013">ADP-ribosylation</keyword>
<keyword id="KW-1040">Host Golgi apparatus</keyword>
<keyword id="KW-0597">Phosphoprotein</keyword>
<keyword id="KW-1185">Reference proteome</keyword>
<keyword id="KW-0687">Ribonucleoprotein</keyword>
<keyword id="KW-0694">RNA-binding</keyword>
<keyword id="KW-0804">Transcription</keyword>
<keyword id="KW-0805">Transcription regulation</keyword>
<keyword id="KW-0543">Viral nucleoprotein</keyword>
<keyword id="KW-0946">Virion</keyword>
<organismHost>
    <name type="scientific">Pipistrellus abramus</name>
    <name type="common">Japanese pipistrelle</name>
    <name type="synonym">Pipistrellus javanicus abramus</name>
    <dbReference type="NCBI Taxonomy" id="105295"/>
</organismHost>
<name>NCAP_BCHK5</name>
<proteinExistence type="inferred from homology"/>
<sequence length="427" mass="46295">MATPAPPRAVVFANDNETPTNSQRSGRPRTKPRPAPNTTVSWFTGLTQHGKQPLAFPPGQGVPLNANSTPAQNAGYWRRQDRKINTGNGTKPLAPRWYFYYTGTGPEANLPFRSVKDGIIWVHENGATDAPSVFGTRNPANDPAIVTQFAPGTTLPKNFHIEGTGGNSQSSSRASSRSSSRSSSRNGRSNNSSRNASPAPHGVGDVVGAGTLSVLLDLQKRLADLEAGKGNKQPKVITKKDAQAAKQKMRHKRVATKGYNVVQAFGMRGPGPLQSNFGDMQYNKLGTEDPRWPQIAELAPSASAFMSTSQFKVTHQSNDENGEPVYFLSYSGAIKLDPKNPNYNKWMEILDANIDAYKSFPKKERKQKPSGDDAATAPATSQMEDVPELPPKQQRKKRVVQGSIPQRSAGVPSFEDVVDAIFPDSEA</sequence>
<organism>
    <name type="scientific">Bat coronavirus HKU5</name>
    <name type="common">BtCoV</name>
    <name type="synonym">BtCoV/HKU5/2004</name>
    <dbReference type="NCBI Taxonomy" id="694008"/>
    <lineage>
        <taxon>Viruses</taxon>
        <taxon>Riboviria</taxon>
        <taxon>Orthornavirae</taxon>
        <taxon>Pisuviricota</taxon>
        <taxon>Pisoniviricetes</taxon>
        <taxon>Nidovirales</taxon>
        <taxon>Cornidovirineae</taxon>
        <taxon>Coronaviridae</taxon>
        <taxon>Orthocoronavirinae</taxon>
        <taxon>Betacoronavirus</taxon>
        <taxon>Merbecovirus</taxon>
    </lineage>
</organism>
<accession>A3EXD7</accession>